<comment type="function">
    <text evidence="2 3">Transcription factor that binds DNA in a non-specific manner, yet also specifically recognizes the core sequence 5'-CAC[GA]TG-3'. Activates the transcription of growth-related genes. Binds to the VEGFA promoter, promoting VEGFA production and subsequent sprouting angiogenesis. Regulator of somatic reprogramming, controls self-renewal of embryonic stem cells. Functions with TAF6L to activate target gene expression through RNA polymerase II pause release (By similarity). Positively regulates transcription of HNRNPA1, HNRNPA2 and PTBP1 which in turn regulate splicing of pyruvate kinase PKM by binding repressively to sequences flanking PKM exon 9, inhibiting exon 9 inclusion and resulting in exon 10 inclusion and production of the PKM M2 isoform (By similarity).</text>
</comment>
<comment type="subunit">
    <text evidence="2 3">Efficient DNA binding requires dimerization with another bHLH protein. Binds DNA as a heterodimer with MAX (By similarity). Interacts with TAF1C and SPAG9. Interacts with PARP10. Interacts with KDM5A and KDM5B. Interacts (when phosphorylated at Thr-58 and Ser-62) with FBXW7. Interacts with PIM2. Interacts with RIOX1. The heterodimer MYC:MAX interacts with ABI1; the interaction may enhance MYC:MAX transcriptional activity. Interacts with TRIM6 (By similarity). Interacts with NPM1; the binary complex is recruited to the promoter of MYC target genes and enhances their transcription (By similarity). Interacts with CIP2A; leading to the stabilization of MYC (By similarity). Interacts with NUP205 (By similarity). Interacts with HEATR1; the interaction is required for localization of MYC to the nucleolus (By similarity).</text>
</comment>
<comment type="subcellular location">
    <subcellularLocation>
        <location evidence="2">Nucleus</location>
        <location evidence="2">Nucleoplasm</location>
    </subcellularLocation>
    <subcellularLocation>
        <location evidence="2">Nucleus</location>
        <location evidence="2">Nucleolus</location>
    </subcellularLocation>
    <subcellularLocation>
        <location evidence="2">Nucleus</location>
    </subcellularLocation>
    <subcellularLocation>
        <location evidence="2">Cytoplasm</location>
    </subcellularLocation>
    <subcellularLocation>
        <location evidence="2">Chromosome</location>
    </subcellularLocation>
    <text evidence="2">Association with chromatin is reduced by hyperphosphorylation. Localization to the nucleolus is dependent on HEATR1.</text>
</comment>
<comment type="domain">
    <text evidence="2">The 9aaTAD motif is a transactivation domain present in a large number of yeast and animal transcription factors.</text>
</comment>
<comment type="PTM">
    <text evidence="2 3">Phosphorylated by PRKDC (By similarity). Phosphorylation at Ser-329 by PIM2 leads to the stabilization of MYC (By similarity). Phosphorylation at Ser-62 by CDK2 prevents Ras-induced senescence. Phosphorylated at Ser-62 by DYRK2; this primes the protein for subsequent phosphorylation by GSK3B at Thr-58. Phosphorylation at Thr-58 and Ser-62 by GSK3 is required for ubiquitination and degradation by the proteasome. Dephosphorylation at multiple sites by the PNUTS-PP1 complex promotes MYC stability by preventing ubiquitination by the SCF(FBXW7) complex. Dephosphorylation at Ser-62 by protein phosphatase 2A (PPP2CA) promotes its degradation; interaction with PPP2CA is enhanced by AMBRA1 (By similarity).</text>
</comment>
<comment type="PTM">
    <text evidence="2 3">Ubiquitinated by the SCF(FBXW7) complex when phosphorylated at Thr-58 and Ser-62, leading to its degradation by the proteasome. Ubiquitination is counteracted by USP28 in the nucleoplasm and USP36 in the nucleolus, both interacting with of FBXW7, leading to its deubiquitination and preventing degradation. Also polyubiquitinated by the DCX(TRPC4AP) complex. Ubiquitinated by UBR5 when not forming a heterodimer with another bHLH protein, leading to its degradation: UBR5 recognizes and binds a degron that is only available upon heterodimer dissociation (By similarity). Ubiquitinated by TRIM6 in a phosphorylation-independent manner.</text>
</comment>
<dbReference type="EMBL" id="DQ977204">
    <property type="protein sequence ID" value="ABM54247.1"/>
    <property type="molecule type" value="Genomic_DNA"/>
</dbReference>
<dbReference type="RefSeq" id="XP_003820503.1">
    <property type="nucleotide sequence ID" value="XM_003820455.6"/>
</dbReference>
<dbReference type="RefSeq" id="XP_008972161.1">
    <property type="nucleotide sequence ID" value="XM_008973913.2"/>
</dbReference>
<dbReference type="RefSeq" id="XP_014201493.1">
    <property type="nucleotide sequence ID" value="XM_014346007.5"/>
</dbReference>
<dbReference type="RefSeq" id="XP_054972921.1">
    <property type="nucleotide sequence ID" value="XM_055116946.2"/>
</dbReference>
<dbReference type="BMRB" id="A1YG22"/>
<dbReference type="STRING" id="9597.ENSPPAP00000007219"/>
<dbReference type="GlyCosmos" id="A1YG22">
    <property type="glycosylation" value="1 site, No reported glycans"/>
</dbReference>
<dbReference type="GeneID" id="103786410"/>
<dbReference type="KEGG" id="pps:103786410"/>
<dbReference type="CTD" id="4609"/>
<dbReference type="eggNOG" id="KOG2483">
    <property type="taxonomic scope" value="Eukaryota"/>
</dbReference>
<dbReference type="Proteomes" id="UP000240080">
    <property type="component" value="Unplaced"/>
</dbReference>
<dbReference type="GO" id="GO:0005737">
    <property type="term" value="C:cytoplasm"/>
    <property type="evidence" value="ECO:0007669"/>
    <property type="project" value="UniProtKB-SubCell"/>
</dbReference>
<dbReference type="GO" id="GO:0005730">
    <property type="term" value="C:nucleolus"/>
    <property type="evidence" value="ECO:0000250"/>
    <property type="project" value="UniProtKB"/>
</dbReference>
<dbReference type="GO" id="GO:0005654">
    <property type="term" value="C:nucleoplasm"/>
    <property type="evidence" value="ECO:0000250"/>
    <property type="project" value="UniProtKB"/>
</dbReference>
<dbReference type="GO" id="GO:0005634">
    <property type="term" value="C:nucleus"/>
    <property type="evidence" value="ECO:0000250"/>
    <property type="project" value="UniProtKB"/>
</dbReference>
<dbReference type="GO" id="GO:0003677">
    <property type="term" value="F:DNA binding"/>
    <property type="evidence" value="ECO:0000250"/>
    <property type="project" value="UniProtKB"/>
</dbReference>
<dbReference type="GO" id="GO:0000981">
    <property type="term" value="F:DNA-binding transcription factor activity, RNA polymerase II-specific"/>
    <property type="evidence" value="ECO:0000250"/>
    <property type="project" value="UniProtKB"/>
</dbReference>
<dbReference type="GO" id="GO:0070888">
    <property type="term" value="F:E-box binding"/>
    <property type="evidence" value="ECO:0000250"/>
    <property type="project" value="UniProtKB"/>
</dbReference>
<dbReference type="GO" id="GO:0046983">
    <property type="term" value="F:protein dimerization activity"/>
    <property type="evidence" value="ECO:0007669"/>
    <property type="project" value="InterPro"/>
</dbReference>
<dbReference type="GO" id="GO:0044877">
    <property type="term" value="F:protein-containing complex binding"/>
    <property type="evidence" value="ECO:0000250"/>
    <property type="project" value="UniProtKB"/>
</dbReference>
<dbReference type="GO" id="GO:0006338">
    <property type="term" value="P:chromatin remodeling"/>
    <property type="evidence" value="ECO:0000250"/>
    <property type="project" value="UniProtKB"/>
</dbReference>
<dbReference type="GO" id="GO:0051276">
    <property type="term" value="P:chromosome organization"/>
    <property type="evidence" value="ECO:0000250"/>
    <property type="project" value="UniProtKB"/>
</dbReference>
<dbReference type="GO" id="GO:0006974">
    <property type="term" value="P:DNA damage response"/>
    <property type="evidence" value="ECO:0000250"/>
    <property type="project" value="UniProtKB"/>
</dbReference>
<dbReference type="GO" id="GO:0000082">
    <property type="term" value="P:G1/S transition of mitotic cell cycle"/>
    <property type="evidence" value="ECO:0000250"/>
    <property type="project" value="UniProtKB"/>
</dbReference>
<dbReference type="GO" id="GO:0006879">
    <property type="term" value="P:intracellular iron ion homeostasis"/>
    <property type="evidence" value="ECO:0000250"/>
    <property type="project" value="UniProtKB"/>
</dbReference>
<dbReference type="GO" id="GO:0000165">
    <property type="term" value="P:MAPK cascade"/>
    <property type="evidence" value="ECO:0000250"/>
    <property type="project" value="UniProtKB"/>
</dbReference>
<dbReference type="GO" id="GO:0043066">
    <property type="term" value="P:negative regulation of apoptotic process"/>
    <property type="evidence" value="ECO:0000250"/>
    <property type="project" value="UniProtKB"/>
</dbReference>
<dbReference type="GO" id="GO:0051782">
    <property type="term" value="P:negative regulation of cell division"/>
    <property type="evidence" value="ECO:0000250"/>
    <property type="project" value="UniProtKB"/>
</dbReference>
<dbReference type="GO" id="GO:0045656">
    <property type="term" value="P:negative regulation of monocyte differentiation"/>
    <property type="evidence" value="ECO:0000250"/>
    <property type="project" value="UniProtKB"/>
</dbReference>
<dbReference type="GO" id="GO:0032873">
    <property type="term" value="P:negative regulation of stress-activated MAPK cascade"/>
    <property type="evidence" value="ECO:0000250"/>
    <property type="project" value="UniProtKB"/>
</dbReference>
<dbReference type="GO" id="GO:0045893">
    <property type="term" value="P:positive regulation of DNA-templated transcription"/>
    <property type="evidence" value="ECO:0000250"/>
    <property type="project" value="UniProtKB"/>
</dbReference>
<dbReference type="GO" id="GO:0050679">
    <property type="term" value="P:positive regulation of epithelial cell proliferation"/>
    <property type="evidence" value="ECO:0000250"/>
    <property type="project" value="UniProtKB"/>
</dbReference>
<dbReference type="GO" id="GO:0048146">
    <property type="term" value="P:positive regulation of fibroblast proliferation"/>
    <property type="evidence" value="ECO:0000250"/>
    <property type="project" value="UniProtKB"/>
</dbReference>
<dbReference type="GO" id="GO:0045944">
    <property type="term" value="P:positive regulation of transcription by RNA polymerase II"/>
    <property type="evidence" value="ECO:0000250"/>
    <property type="project" value="UniProtKB"/>
</dbReference>
<dbReference type="GO" id="GO:0006355">
    <property type="term" value="P:regulation of DNA-templated transcription"/>
    <property type="evidence" value="ECO:0000250"/>
    <property type="project" value="UniProtKB"/>
</dbReference>
<dbReference type="GO" id="GO:1904672">
    <property type="term" value="P:regulation of somatic stem cell population maintenance"/>
    <property type="evidence" value="ECO:0000250"/>
    <property type="project" value="UniProtKB"/>
</dbReference>
<dbReference type="GO" id="GO:0032204">
    <property type="term" value="P:regulation of telomere maintenance"/>
    <property type="evidence" value="ECO:0000250"/>
    <property type="project" value="UniProtKB"/>
</dbReference>
<dbReference type="GO" id="GO:0009410">
    <property type="term" value="P:response to xenobiotic stimulus"/>
    <property type="evidence" value="ECO:0000250"/>
    <property type="project" value="UniProtKB"/>
</dbReference>
<dbReference type="GO" id="GO:0016072">
    <property type="term" value="P:rRNA metabolic process"/>
    <property type="evidence" value="ECO:0000250"/>
    <property type="project" value="UniProtKB"/>
</dbReference>
<dbReference type="CDD" id="cd11458">
    <property type="entry name" value="bHLHzip_c-Myc"/>
    <property type="match status" value="1"/>
</dbReference>
<dbReference type="FunFam" id="4.10.280.10:FF:000019">
    <property type="entry name" value="Myc proto-oncogene protein"/>
    <property type="match status" value="1"/>
</dbReference>
<dbReference type="Gene3D" id="4.10.280.10">
    <property type="entry name" value="Helix-loop-helix DNA-binding domain"/>
    <property type="match status" value="1"/>
</dbReference>
<dbReference type="InterPro" id="IPR011598">
    <property type="entry name" value="bHLH_dom"/>
</dbReference>
<dbReference type="InterPro" id="IPR036638">
    <property type="entry name" value="HLH_DNA-bd_sf"/>
</dbReference>
<dbReference type="InterPro" id="IPR003327">
    <property type="entry name" value="Myc-LZ"/>
</dbReference>
<dbReference type="InterPro" id="IPR050433">
    <property type="entry name" value="Myc_transcription_factors"/>
</dbReference>
<dbReference type="InterPro" id="IPR002418">
    <property type="entry name" value="Tscrpt_reg_Myc"/>
</dbReference>
<dbReference type="InterPro" id="IPR012682">
    <property type="entry name" value="Tscrpt_reg_Myc_N"/>
</dbReference>
<dbReference type="PANTHER" id="PTHR45851">
    <property type="entry name" value="MYC PROTO-ONCOGENE"/>
    <property type="match status" value="1"/>
</dbReference>
<dbReference type="Pfam" id="PF00010">
    <property type="entry name" value="HLH"/>
    <property type="match status" value="1"/>
</dbReference>
<dbReference type="Pfam" id="PF02344">
    <property type="entry name" value="Myc-LZ"/>
    <property type="match status" value="1"/>
</dbReference>
<dbReference type="Pfam" id="PF01056">
    <property type="entry name" value="Myc_N"/>
    <property type="match status" value="1"/>
</dbReference>
<dbReference type="PIRSF" id="PIRSF001705">
    <property type="entry name" value="Myc_protein"/>
    <property type="match status" value="1"/>
</dbReference>
<dbReference type="PRINTS" id="PR00044">
    <property type="entry name" value="LEUZIPPRMYC"/>
</dbReference>
<dbReference type="SMART" id="SM00353">
    <property type="entry name" value="HLH"/>
    <property type="match status" value="1"/>
</dbReference>
<dbReference type="SUPFAM" id="SSF47459">
    <property type="entry name" value="HLH, helix-loop-helix DNA-binding domain"/>
    <property type="match status" value="1"/>
</dbReference>
<dbReference type="PROSITE" id="PS50888">
    <property type="entry name" value="BHLH"/>
    <property type="match status" value="1"/>
</dbReference>
<reference key="1">
    <citation type="submission" date="2006-08" db="EMBL/GenBank/DDBJ databases">
        <title>Positive selection in transcription factor genes on the human lineage.</title>
        <authorList>
            <person name="Nickel G.C."/>
            <person name="Tefft D.L."/>
            <person name="Trevarthen K."/>
            <person name="Funt J."/>
            <person name="Adams M.D."/>
        </authorList>
    </citation>
    <scope>NUCLEOTIDE SEQUENCE [GENOMIC DNA]</scope>
</reference>
<protein>
    <recommendedName>
        <fullName>Myc proto-oncogene protein</fullName>
    </recommendedName>
    <alternativeName>
        <fullName>Proto-oncogene c-Myc</fullName>
    </alternativeName>
    <alternativeName>
        <fullName>Transcription factor p64</fullName>
    </alternativeName>
</protein>
<accession>A1YG22</accession>
<proteinExistence type="inferred from homology"/>
<feature type="chain" id="PRO_0000285820" description="Myc proto-oncogene protein">
    <location>
        <begin position="1"/>
        <end position="439"/>
    </location>
</feature>
<feature type="domain" description="bHLH" evidence="4">
    <location>
        <begin position="354"/>
        <end position="406"/>
    </location>
</feature>
<feature type="region of interest" description="Disordered" evidence="5">
    <location>
        <begin position="202"/>
        <end position="295"/>
    </location>
</feature>
<feature type="region of interest" description="Disordered" evidence="5">
    <location>
        <begin position="335"/>
        <end position="365"/>
    </location>
</feature>
<feature type="region of interest" description="Leucine-zipper">
    <location>
        <begin position="413"/>
        <end position="434"/>
    </location>
</feature>
<feature type="short sequence motif" description="9aaTAD" evidence="2">
    <location>
        <begin position="100"/>
        <end position="108"/>
    </location>
</feature>
<feature type="short sequence motif" description="UBR5-degron" evidence="2">
    <location>
        <begin position="355"/>
        <end position="364"/>
    </location>
</feature>
<feature type="compositionally biased region" description="Low complexity" evidence="5">
    <location>
        <begin position="203"/>
        <end position="237"/>
    </location>
</feature>
<feature type="compositionally biased region" description="Acidic residues" evidence="5">
    <location>
        <begin position="251"/>
        <end position="263"/>
    </location>
</feature>
<feature type="compositionally biased region" description="Basic and acidic residues" evidence="5">
    <location>
        <begin position="266"/>
        <end position="278"/>
    </location>
</feature>
<feature type="compositionally biased region" description="Polar residues" evidence="5">
    <location>
        <begin position="335"/>
        <end position="347"/>
    </location>
</feature>
<feature type="modified residue" description="Phosphoserine" evidence="2">
    <location>
        <position position="6"/>
    </location>
</feature>
<feature type="modified residue" description="Phosphothreonine" evidence="2">
    <location>
        <position position="8"/>
    </location>
</feature>
<feature type="modified residue" description="Phosphothreonine; by GSK3; alternate" evidence="2">
    <location>
        <position position="58"/>
    </location>
</feature>
<feature type="modified residue" description="Phosphoserine; by DYRK2, GSK3 and CDK2" evidence="2">
    <location>
        <position position="62"/>
    </location>
</feature>
<feature type="modified residue" description="Phosphoserine" evidence="2">
    <location>
        <position position="71"/>
    </location>
</feature>
<feature type="modified residue" description="Phosphoserine" evidence="2">
    <location>
        <position position="81"/>
    </location>
</feature>
<feature type="modified residue" description="N6-acetyllysine; by PCAF; alternate" evidence="2">
    <location>
        <position position="143"/>
    </location>
</feature>
<feature type="modified residue" description="N6-acetyllysine; alternate" evidence="2">
    <location>
        <position position="148"/>
    </location>
</feature>
<feature type="modified residue" description="Phosphoserine" evidence="2">
    <location>
        <position position="151"/>
    </location>
</feature>
<feature type="modified residue" description="N6-acetyllysine; by PCAF" evidence="2">
    <location>
        <position position="157"/>
    </location>
</feature>
<feature type="modified residue" description="Phosphoserine" evidence="2">
    <location>
        <position position="159"/>
    </location>
</feature>
<feature type="modified residue" description="Phosphoserine" evidence="2">
    <location>
        <position position="161"/>
    </location>
</feature>
<feature type="modified residue" description="N6-acetyllysine; by PCAF" evidence="2">
    <location>
        <position position="275"/>
    </location>
</feature>
<feature type="modified residue" description="Phosphoserine" evidence="2">
    <location>
        <position position="293"/>
    </location>
</feature>
<feature type="modified residue" description="Phosphoserine" evidence="2">
    <location>
        <position position="314"/>
    </location>
</feature>
<feature type="modified residue" description="Phosphothreonine" evidence="2">
    <location>
        <position position="315"/>
    </location>
</feature>
<feature type="modified residue" description="N6-acetyllysine; by PCAF" evidence="2">
    <location>
        <position position="317"/>
    </location>
</feature>
<feature type="modified residue" description="N6-acetyllysine; by PCAF" evidence="2">
    <location>
        <position position="323"/>
    </location>
</feature>
<feature type="modified residue" description="Phosphoserine" evidence="3">
    <location>
        <position position="329"/>
    </location>
</feature>
<feature type="modified residue" description="Phosphoserine" evidence="2">
    <location>
        <position position="344"/>
    </location>
</feature>
<feature type="modified residue" description="Phosphoserine" evidence="2">
    <location>
        <position position="347"/>
    </location>
</feature>
<feature type="modified residue" description="Phosphoserine" evidence="2">
    <location>
        <position position="348"/>
    </location>
</feature>
<feature type="modified residue" description="N6-acetyllysine; by PCAF" evidence="2">
    <location>
        <position position="371"/>
    </location>
</feature>
<feature type="glycosylation site" description="O-linked (GlcNAc) threonine; alternate" evidence="1">
    <location>
        <position position="58"/>
    </location>
</feature>
<feature type="cross-link" description="Glycyl lysine isopeptide (Lys-Gly) (interchain with G-Cter in SUMO2)" evidence="2">
    <location>
        <position position="52"/>
    </location>
</feature>
<feature type="cross-link" description="Glycyl lysine isopeptide (Lys-Gly) (interchain with G-Cter in SUMO2); alternate" evidence="2">
    <location>
        <position position="143"/>
    </location>
</feature>
<feature type="cross-link" description="Glycyl lysine isopeptide (Lys-Gly) (interchain with G-Cter in SUMO2); alternate" evidence="2">
    <location>
        <position position="148"/>
    </location>
</feature>
<feature type="cross-link" description="Glycyl lysine isopeptide (Lys-Gly) (interchain with G-Cter in SUMO2)" evidence="2">
    <location>
        <position position="298"/>
    </location>
</feature>
<organism>
    <name type="scientific">Pan paniscus</name>
    <name type="common">Pygmy chimpanzee</name>
    <name type="synonym">Bonobo</name>
    <dbReference type="NCBI Taxonomy" id="9597"/>
    <lineage>
        <taxon>Eukaryota</taxon>
        <taxon>Metazoa</taxon>
        <taxon>Chordata</taxon>
        <taxon>Craniata</taxon>
        <taxon>Vertebrata</taxon>
        <taxon>Euteleostomi</taxon>
        <taxon>Mammalia</taxon>
        <taxon>Eutheria</taxon>
        <taxon>Euarchontoglires</taxon>
        <taxon>Primates</taxon>
        <taxon>Haplorrhini</taxon>
        <taxon>Catarrhini</taxon>
        <taxon>Hominidae</taxon>
        <taxon>Pan</taxon>
    </lineage>
</organism>
<name>MYC_PANPA</name>
<gene>
    <name type="primary">MYC</name>
</gene>
<sequence length="439" mass="48816">MPLNVSFTNRNYDLDYDSVQPYFYCDEEENFYQQQQQSELQPPAPSEDIWKKFELLPTPPLSPSRRSGLCSPSYVAVTPFSLRGDNDGGGGSFSTADQLEMVTELLGGDMVNQSFICDPDDETFIKNIIIQDCMWSGFSAAAKLVSEKLASYQAARKDSGSPNPARGHSVCSTSSLYLQDLSAAASECIDPSVVFPYPLNDGSSPKSCPSQDSSAFSPSSDSLLSSTESSPQGSPEPLVLHEETPPTTSSDSEEEQEDEEEIDVVSVEKRQAPGKRSESGSPSAGGHSKPPHSPLVLKRCHVSTHQHNYAAPPSTRKDYPAAKRVKLDSVRVLRQISNNRKCTSPRSSDTEENDKRRTHNVLERQRRNELKRSFFALRDQIPELENNEKAPKVVILKKATAYILSVQAEEQKLISEEDLLRKRREQLKHKLEQLRNSCA</sequence>
<evidence type="ECO:0000250" key="1"/>
<evidence type="ECO:0000250" key="2">
    <source>
        <dbReference type="UniProtKB" id="P01106"/>
    </source>
</evidence>
<evidence type="ECO:0000250" key="3">
    <source>
        <dbReference type="UniProtKB" id="P01108"/>
    </source>
</evidence>
<evidence type="ECO:0000255" key="4">
    <source>
        <dbReference type="PROSITE-ProRule" id="PRU00981"/>
    </source>
</evidence>
<evidence type="ECO:0000256" key="5">
    <source>
        <dbReference type="SAM" id="MobiDB-lite"/>
    </source>
</evidence>
<keyword id="KW-0007">Acetylation</keyword>
<keyword id="KW-0010">Activator</keyword>
<keyword id="KW-0158">Chromosome</keyword>
<keyword id="KW-0963">Cytoplasm</keyword>
<keyword id="KW-0238">DNA-binding</keyword>
<keyword id="KW-0325">Glycoprotein</keyword>
<keyword id="KW-1017">Isopeptide bond</keyword>
<keyword id="KW-0539">Nucleus</keyword>
<keyword id="KW-0597">Phosphoprotein</keyword>
<keyword id="KW-0656">Proto-oncogene</keyword>
<keyword id="KW-1185">Reference proteome</keyword>
<keyword id="KW-0804">Transcription</keyword>
<keyword id="KW-0805">Transcription regulation</keyword>
<keyword id="KW-0832">Ubl conjugation</keyword>